<evidence type="ECO:0000255" key="1">
    <source>
        <dbReference type="HAMAP-Rule" id="MF_00950"/>
    </source>
</evidence>
<proteinExistence type="inferred from homology"/>
<reference key="1">
    <citation type="journal article" date="1999" name="DNA Res.">
        <title>Complete genome sequence of an aerobic hyper-thermophilic crenarchaeon, Aeropyrum pernix K1.</title>
        <authorList>
            <person name="Kawarabayasi Y."/>
            <person name="Hino Y."/>
            <person name="Horikawa H."/>
            <person name="Yamazaki S."/>
            <person name="Haikawa Y."/>
            <person name="Jin-no K."/>
            <person name="Takahashi M."/>
            <person name="Sekine M."/>
            <person name="Baba S."/>
            <person name="Ankai A."/>
            <person name="Kosugi H."/>
            <person name="Hosoyama A."/>
            <person name="Fukui S."/>
            <person name="Nagai Y."/>
            <person name="Nishijima K."/>
            <person name="Nakazawa H."/>
            <person name="Takamiya M."/>
            <person name="Masuda S."/>
            <person name="Funahashi T."/>
            <person name="Tanaka T."/>
            <person name="Kudoh Y."/>
            <person name="Yamazaki J."/>
            <person name="Kushida N."/>
            <person name="Oguchi A."/>
            <person name="Aoki K."/>
            <person name="Kubota K."/>
            <person name="Nakamura Y."/>
            <person name="Nomura N."/>
            <person name="Sako Y."/>
            <person name="Kikuchi H."/>
        </authorList>
    </citation>
    <scope>NUCLEOTIDE SEQUENCE [LARGE SCALE GENOMIC DNA]</scope>
    <source>
        <strain>ATCC 700893 / DSM 11879 / JCM 9820 / NBRC 100138 / K1</strain>
    </source>
</reference>
<dbReference type="EMBL" id="BA000002">
    <property type="protein sequence ID" value="BAA81187.2"/>
    <property type="molecule type" value="Genomic_DNA"/>
</dbReference>
<dbReference type="PIR" id="C72525">
    <property type="entry name" value="C72525"/>
</dbReference>
<dbReference type="RefSeq" id="WP_010866844.1">
    <property type="nucleotide sequence ID" value="NC_000854.2"/>
</dbReference>
<dbReference type="SMR" id="Q9Y9W3"/>
<dbReference type="STRING" id="272557.APE_2176.1"/>
<dbReference type="EnsemblBacteria" id="BAA81187">
    <property type="protein sequence ID" value="BAA81187"/>
    <property type="gene ID" value="APE_2176.1"/>
</dbReference>
<dbReference type="GeneID" id="1445242"/>
<dbReference type="KEGG" id="ape:APE_2176.1"/>
<dbReference type="eggNOG" id="arCOG01920">
    <property type="taxonomic scope" value="Archaea"/>
</dbReference>
<dbReference type="Proteomes" id="UP000002518">
    <property type="component" value="Chromosome"/>
</dbReference>
<dbReference type="GO" id="GO:0003746">
    <property type="term" value="F:translation elongation factor activity"/>
    <property type="evidence" value="ECO:0007669"/>
    <property type="project" value="InterPro"/>
</dbReference>
<dbReference type="GO" id="GO:0006355">
    <property type="term" value="P:regulation of DNA-templated transcription"/>
    <property type="evidence" value="ECO:0007669"/>
    <property type="project" value="UniProtKB-UniRule"/>
</dbReference>
<dbReference type="GO" id="GO:0140673">
    <property type="term" value="P:transcription elongation-coupled chromatin remodeling"/>
    <property type="evidence" value="ECO:0007669"/>
    <property type="project" value="InterPro"/>
</dbReference>
<dbReference type="CDD" id="cd06091">
    <property type="entry name" value="KOW_NusG"/>
    <property type="match status" value="1"/>
</dbReference>
<dbReference type="CDD" id="cd09887">
    <property type="entry name" value="NGN_Arch"/>
    <property type="match status" value="1"/>
</dbReference>
<dbReference type="Gene3D" id="2.30.30.30">
    <property type="match status" value="1"/>
</dbReference>
<dbReference type="Gene3D" id="3.30.70.940">
    <property type="entry name" value="NusG, N-terminal domain"/>
    <property type="match status" value="1"/>
</dbReference>
<dbReference type="HAMAP" id="MF_00950">
    <property type="entry name" value="Spt5_arch"/>
    <property type="match status" value="1"/>
</dbReference>
<dbReference type="InterPro" id="IPR005824">
    <property type="entry name" value="KOW"/>
</dbReference>
<dbReference type="InterPro" id="IPR005100">
    <property type="entry name" value="NGN-domain"/>
</dbReference>
<dbReference type="InterPro" id="IPR006645">
    <property type="entry name" value="NGN-like_dom"/>
</dbReference>
<dbReference type="InterPro" id="IPR036735">
    <property type="entry name" value="NGN_dom_sf"/>
</dbReference>
<dbReference type="InterPro" id="IPR014722">
    <property type="entry name" value="Rib_uL2_dom2"/>
</dbReference>
<dbReference type="InterPro" id="IPR011590">
    <property type="entry name" value="Spt5_arc"/>
</dbReference>
<dbReference type="InterPro" id="IPR008991">
    <property type="entry name" value="Translation_prot_SH3-like_sf"/>
</dbReference>
<dbReference type="NCBIfam" id="TIGR00405">
    <property type="entry name" value="KOW_elon_Spt5"/>
    <property type="match status" value="1"/>
</dbReference>
<dbReference type="Pfam" id="PF00467">
    <property type="entry name" value="KOW"/>
    <property type="match status" value="1"/>
</dbReference>
<dbReference type="Pfam" id="PF03439">
    <property type="entry name" value="Spt5-NGN"/>
    <property type="match status" value="1"/>
</dbReference>
<dbReference type="SMART" id="SM00739">
    <property type="entry name" value="KOW"/>
    <property type="match status" value="1"/>
</dbReference>
<dbReference type="SMART" id="SM00738">
    <property type="entry name" value="NGN"/>
    <property type="match status" value="1"/>
</dbReference>
<dbReference type="SUPFAM" id="SSF50104">
    <property type="entry name" value="Translation proteins SH3-like domain"/>
    <property type="match status" value="1"/>
</dbReference>
<organism>
    <name type="scientific">Aeropyrum pernix (strain ATCC 700893 / DSM 11879 / JCM 9820 / NBRC 100138 / K1)</name>
    <dbReference type="NCBI Taxonomy" id="272557"/>
    <lineage>
        <taxon>Archaea</taxon>
        <taxon>Thermoproteota</taxon>
        <taxon>Thermoprotei</taxon>
        <taxon>Desulfurococcales</taxon>
        <taxon>Desulfurococcaceae</taxon>
        <taxon>Aeropyrum</taxon>
    </lineage>
</organism>
<feature type="chain" id="PRO_0000113977" description="Transcription elongation factor Spt5">
    <location>
        <begin position="1"/>
        <end position="151"/>
    </location>
</feature>
<feature type="domain" description="KOW" evidence="1">
    <location>
        <begin position="98"/>
        <end position="128"/>
    </location>
</feature>
<gene>
    <name evidence="1" type="primary">spt5</name>
    <name type="ordered locus">APE_2176.1</name>
</gene>
<name>SPT5_AERPE</name>
<sequence>MEGGVDARFYAILVTSGAEVNVATIIAERARALGLDIRSIIVPPRIKGYVILEAHDPGDVYDATRGLRHVKRRRPLILKFEEVMKLVKPEVEIPALKPGQVVEIVAGAFKGMKARVIDVNQSKGQVTVSLLEPLFRATATIPIDEVRPVEE</sequence>
<accession>Q9Y9W3</accession>
<protein>
    <recommendedName>
        <fullName evidence="1">Transcription elongation factor Spt5</fullName>
    </recommendedName>
</protein>
<comment type="function">
    <text evidence="1">Stimulates transcription elongation.</text>
</comment>
<comment type="subunit">
    <text evidence="1">Heterodimer composed of Spt4 and Spt5. Interacts with RNA polymerase (RNAP).</text>
</comment>
<comment type="similarity">
    <text evidence="1">Belongs to the archaeal Spt5 family.</text>
</comment>
<keyword id="KW-1185">Reference proteome</keyword>
<keyword id="KW-0804">Transcription</keyword>
<keyword id="KW-0805">Transcription regulation</keyword>